<evidence type="ECO:0000255" key="1">
    <source>
        <dbReference type="HAMAP-Rule" id="MF_00435"/>
    </source>
</evidence>
<evidence type="ECO:0000255" key="2">
    <source>
        <dbReference type="PROSITE-ProRule" id="PRU01197"/>
    </source>
</evidence>
<evidence type="ECO:0000255" key="3">
    <source>
        <dbReference type="PROSITE-ProRule" id="PRU01198"/>
    </source>
</evidence>
<keyword id="KW-0028">Amino-acid biosynthesis</keyword>
<keyword id="KW-0100">Branched-chain amino acid biosynthesis</keyword>
<keyword id="KW-0460">Magnesium</keyword>
<keyword id="KW-0479">Metal-binding</keyword>
<keyword id="KW-0521">NADP</keyword>
<keyword id="KW-0560">Oxidoreductase</keyword>
<keyword id="KW-1185">Reference proteome</keyword>
<protein>
    <recommendedName>
        <fullName evidence="1">Ketol-acid reductoisomerase (NADP(+))</fullName>
        <shortName evidence="1">KARI</shortName>
        <ecNumber evidence="1">1.1.1.86</ecNumber>
    </recommendedName>
    <alternativeName>
        <fullName evidence="1">Acetohydroxy-acid isomeroreductase</fullName>
        <shortName evidence="1">AHIR</shortName>
    </alternativeName>
    <alternativeName>
        <fullName evidence="1">Alpha-keto-beta-hydroxylacyl reductoisomerase</fullName>
    </alternativeName>
    <alternativeName>
        <fullName evidence="1">Ketol-acid reductoisomerase type 1</fullName>
    </alternativeName>
    <alternativeName>
        <fullName evidence="1">Ketol-acid reductoisomerase type I</fullName>
    </alternativeName>
</protein>
<gene>
    <name evidence="1" type="primary">ilvC</name>
    <name type="ordered locus">THEYE_A0653</name>
</gene>
<comment type="function">
    <text evidence="1">Involved in the biosynthesis of branched-chain amino acids (BCAA). Catalyzes an alkyl-migration followed by a ketol-acid reduction of (S)-2-acetolactate (S2AL) to yield (R)-2,3-dihydroxy-isovalerate. In the isomerase reaction, S2AL is rearranged via a Mg-dependent methyl migration to produce 3-hydroxy-3-methyl-2-ketobutyrate (HMKB). In the reductase reaction, this 2-ketoacid undergoes a metal-dependent reduction by NADPH to yield (R)-2,3-dihydroxy-isovalerate.</text>
</comment>
<comment type="catalytic activity">
    <reaction evidence="1">
        <text>(2R)-2,3-dihydroxy-3-methylbutanoate + NADP(+) = (2S)-2-acetolactate + NADPH + H(+)</text>
        <dbReference type="Rhea" id="RHEA:22068"/>
        <dbReference type="ChEBI" id="CHEBI:15378"/>
        <dbReference type="ChEBI" id="CHEBI:49072"/>
        <dbReference type="ChEBI" id="CHEBI:57783"/>
        <dbReference type="ChEBI" id="CHEBI:58349"/>
        <dbReference type="ChEBI" id="CHEBI:58476"/>
        <dbReference type="EC" id="1.1.1.86"/>
    </reaction>
</comment>
<comment type="catalytic activity">
    <reaction evidence="1">
        <text>(2R,3R)-2,3-dihydroxy-3-methylpentanoate + NADP(+) = (S)-2-ethyl-2-hydroxy-3-oxobutanoate + NADPH + H(+)</text>
        <dbReference type="Rhea" id="RHEA:13493"/>
        <dbReference type="ChEBI" id="CHEBI:15378"/>
        <dbReference type="ChEBI" id="CHEBI:49256"/>
        <dbReference type="ChEBI" id="CHEBI:49258"/>
        <dbReference type="ChEBI" id="CHEBI:57783"/>
        <dbReference type="ChEBI" id="CHEBI:58349"/>
        <dbReference type="EC" id="1.1.1.86"/>
    </reaction>
</comment>
<comment type="cofactor">
    <cofactor evidence="1">
        <name>Mg(2+)</name>
        <dbReference type="ChEBI" id="CHEBI:18420"/>
    </cofactor>
    <text evidence="1">Binds 2 magnesium ions per subunit.</text>
</comment>
<comment type="pathway">
    <text evidence="1">Amino-acid biosynthesis; L-isoleucine biosynthesis; L-isoleucine from 2-oxobutanoate: step 2/4.</text>
</comment>
<comment type="pathway">
    <text evidence="1">Amino-acid biosynthesis; L-valine biosynthesis; L-valine from pyruvate: step 2/4.</text>
</comment>
<comment type="similarity">
    <text evidence="1">Belongs to the ketol-acid reductoisomerase family.</text>
</comment>
<accession>B5YJT0</accession>
<sequence>MKIYYDTDVNTDILKGKKIAIIGYGSQGHAHANNLKDSGFDVIVGVRKGKSWEKAENAGLTVMTVADASKMADIIMILTPDELQADLYKNEIEPNIKKGAFLAFAHGFNIHFGQIVPSSDINIFMVAPKGPGHLVRSEYLKGMGVPCLMAVHQDPSGITKDVALAYAVGIGGGRAGIIETTFKDETETDLFGEQVVLCGGLTALITAAYETLVEAGYPPELAYFECLHEVKLIADLIYEGGISTMRYSISNTAQYGDLTRGPRVINSSVKAEMKKILNEIQSGQFAKEWILECKVGKPTFNALTKQGEEHPIEKVGEKLRAMMPWLKSSKLVDKSKA</sequence>
<dbReference type="EC" id="1.1.1.86" evidence="1"/>
<dbReference type="EMBL" id="CP001147">
    <property type="protein sequence ID" value="ACI21099.1"/>
    <property type="molecule type" value="Genomic_DNA"/>
</dbReference>
<dbReference type="RefSeq" id="WP_012545824.1">
    <property type="nucleotide sequence ID" value="NC_011296.1"/>
</dbReference>
<dbReference type="RefSeq" id="YP_002248495.1">
    <property type="nucleotide sequence ID" value="NC_011296.1"/>
</dbReference>
<dbReference type="SMR" id="B5YJT0"/>
<dbReference type="FunCoup" id="B5YJT0">
    <property type="interactions" value="417"/>
</dbReference>
<dbReference type="STRING" id="289376.THEYE_A0653"/>
<dbReference type="EnsemblBacteria" id="ACI21099">
    <property type="protein sequence ID" value="ACI21099"/>
    <property type="gene ID" value="THEYE_A0653"/>
</dbReference>
<dbReference type="KEGG" id="tye:THEYE_A0653"/>
<dbReference type="PATRIC" id="fig|289376.4.peg.646"/>
<dbReference type="eggNOG" id="COG0059">
    <property type="taxonomic scope" value="Bacteria"/>
</dbReference>
<dbReference type="HOGENOM" id="CLU_033821_0_1_0"/>
<dbReference type="InParanoid" id="B5YJT0"/>
<dbReference type="OrthoDB" id="9804088at2"/>
<dbReference type="UniPathway" id="UPA00047">
    <property type="reaction ID" value="UER00056"/>
</dbReference>
<dbReference type="UniPathway" id="UPA00049">
    <property type="reaction ID" value="UER00060"/>
</dbReference>
<dbReference type="Proteomes" id="UP000000718">
    <property type="component" value="Chromosome"/>
</dbReference>
<dbReference type="GO" id="GO:0005829">
    <property type="term" value="C:cytosol"/>
    <property type="evidence" value="ECO:0000318"/>
    <property type="project" value="GO_Central"/>
</dbReference>
<dbReference type="GO" id="GO:0004455">
    <property type="term" value="F:ketol-acid reductoisomerase activity"/>
    <property type="evidence" value="ECO:0000318"/>
    <property type="project" value="GO_Central"/>
</dbReference>
<dbReference type="GO" id="GO:0000287">
    <property type="term" value="F:magnesium ion binding"/>
    <property type="evidence" value="ECO:0007669"/>
    <property type="project" value="UniProtKB-UniRule"/>
</dbReference>
<dbReference type="GO" id="GO:0050661">
    <property type="term" value="F:NADP binding"/>
    <property type="evidence" value="ECO:0007669"/>
    <property type="project" value="InterPro"/>
</dbReference>
<dbReference type="GO" id="GO:0009097">
    <property type="term" value="P:isoleucine biosynthetic process"/>
    <property type="evidence" value="ECO:0000318"/>
    <property type="project" value="GO_Central"/>
</dbReference>
<dbReference type="GO" id="GO:0009099">
    <property type="term" value="P:L-valine biosynthetic process"/>
    <property type="evidence" value="ECO:0000318"/>
    <property type="project" value="GO_Central"/>
</dbReference>
<dbReference type="FunFam" id="3.40.50.720:FF:000023">
    <property type="entry name" value="Ketol-acid reductoisomerase (NADP(+))"/>
    <property type="match status" value="1"/>
</dbReference>
<dbReference type="Gene3D" id="6.10.240.10">
    <property type="match status" value="1"/>
</dbReference>
<dbReference type="Gene3D" id="3.40.50.720">
    <property type="entry name" value="NAD(P)-binding Rossmann-like Domain"/>
    <property type="match status" value="1"/>
</dbReference>
<dbReference type="HAMAP" id="MF_00435">
    <property type="entry name" value="IlvC"/>
    <property type="match status" value="1"/>
</dbReference>
<dbReference type="InterPro" id="IPR008927">
    <property type="entry name" value="6-PGluconate_DH-like_C_sf"/>
</dbReference>
<dbReference type="InterPro" id="IPR013023">
    <property type="entry name" value="KARI"/>
</dbReference>
<dbReference type="InterPro" id="IPR000506">
    <property type="entry name" value="KARI_C"/>
</dbReference>
<dbReference type="InterPro" id="IPR013116">
    <property type="entry name" value="KARI_N"/>
</dbReference>
<dbReference type="InterPro" id="IPR014359">
    <property type="entry name" value="KARI_prok"/>
</dbReference>
<dbReference type="InterPro" id="IPR036291">
    <property type="entry name" value="NAD(P)-bd_dom_sf"/>
</dbReference>
<dbReference type="NCBIfam" id="TIGR00465">
    <property type="entry name" value="ilvC"/>
    <property type="match status" value="1"/>
</dbReference>
<dbReference type="NCBIfam" id="NF004017">
    <property type="entry name" value="PRK05479.1"/>
    <property type="match status" value="1"/>
</dbReference>
<dbReference type="NCBIfam" id="NF009940">
    <property type="entry name" value="PRK13403.1"/>
    <property type="match status" value="1"/>
</dbReference>
<dbReference type="PANTHER" id="PTHR21371">
    <property type="entry name" value="KETOL-ACID REDUCTOISOMERASE, MITOCHONDRIAL"/>
    <property type="match status" value="1"/>
</dbReference>
<dbReference type="PANTHER" id="PTHR21371:SF1">
    <property type="entry name" value="KETOL-ACID REDUCTOISOMERASE, MITOCHONDRIAL"/>
    <property type="match status" value="1"/>
</dbReference>
<dbReference type="Pfam" id="PF01450">
    <property type="entry name" value="KARI_C"/>
    <property type="match status" value="1"/>
</dbReference>
<dbReference type="Pfam" id="PF07991">
    <property type="entry name" value="KARI_N"/>
    <property type="match status" value="1"/>
</dbReference>
<dbReference type="PIRSF" id="PIRSF000116">
    <property type="entry name" value="IlvC_gammaproteo"/>
    <property type="match status" value="1"/>
</dbReference>
<dbReference type="SUPFAM" id="SSF48179">
    <property type="entry name" value="6-phosphogluconate dehydrogenase C-terminal domain-like"/>
    <property type="match status" value="1"/>
</dbReference>
<dbReference type="SUPFAM" id="SSF51735">
    <property type="entry name" value="NAD(P)-binding Rossmann-fold domains"/>
    <property type="match status" value="1"/>
</dbReference>
<dbReference type="PROSITE" id="PS51851">
    <property type="entry name" value="KARI_C"/>
    <property type="match status" value="1"/>
</dbReference>
<dbReference type="PROSITE" id="PS51850">
    <property type="entry name" value="KARI_N"/>
    <property type="match status" value="1"/>
</dbReference>
<reference key="1">
    <citation type="submission" date="2008-08" db="EMBL/GenBank/DDBJ databases">
        <title>The complete genome sequence of Thermodesulfovibrio yellowstonii strain ATCC 51303 / DSM 11347 / YP87.</title>
        <authorList>
            <person name="Dodson R.J."/>
            <person name="Durkin A.S."/>
            <person name="Wu M."/>
            <person name="Eisen J."/>
            <person name="Sutton G."/>
        </authorList>
    </citation>
    <scope>NUCLEOTIDE SEQUENCE [LARGE SCALE GENOMIC DNA]</scope>
    <source>
        <strain>ATCC 51303 / DSM 11347 / YP87</strain>
    </source>
</reference>
<feature type="chain" id="PRO_1000191009" description="Ketol-acid reductoisomerase (NADP(+))">
    <location>
        <begin position="1"/>
        <end position="337"/>
    </location>
</feature>
<feature type="domain" description="KARI N-terminal Rossmann" evidence="2">
    <location>
        <begin position="1"/>
        <end position="180"/>
    </location>
</feature>
<feature type="domain" description="KARI C-terminal knotted" evidence="3">
    <location>
        <begin position="181"/>
        <end position="326"/>
    </location>
</feature>
<feature type="active site" evidence="1">
    <location>
        <position position="106"/>
    </location>
</feature>
<feature type="binding site" evidence="1">
    <location>
        <begin position="24"/>
        <end position="27"/>
    </location>
    <ligand>
        <name>NADP(+)</name>
        <dbReference type="ChEBI" id="CHEBI:58349"/>
    </ligand>
</feature>
<feature type="binding site" evidence="1">
    <location>
        <position position="47"/>
    </location>
    <ligand>
        <name>NADP(+)</name>
        <dbReference type="ChEBI" id="CHEBI:58349"/>
    </ligand>
</feature>
<feature type="binding site" evidence="1">
    <location>
        <position position="51"/>
    </location>
    <ligand>
        <name>NADP(+)</name>
        <dbReference type="ChEBI" id="CHEBI:58349"/>
    </ligand>
</feature>
<feature type="binding site" evidence="1">
    <location>
        <begin position="81"/>
        <end position="84"/>
    </location>
    <ligand>
        <name>NADP(+)</name>
        <dbReference type="ChEBI" id="CHEBI:58349"/>
    </ligand>
</feature>
<feature type="binding site" evidence="1">
    <location>
        <position position="132"/>
    </location>
    <ligand>
        <name>NADP(+)</name>
        <dbReference type="ChEBI" id="CHEBI:58349"/>
    </ligand>
</feature>
<feature type="binding site" evidence="1">
    <location>
        <position position="189"/>
    </location>
    <ligand>
        <name>Mg(2+)</name>
        <dbReference type="ChEBI" id="CHEBI:18420"/>
        <label>1</label>
    </ligand>
</feature>
<feature type="binding site" evidence="1">
    <location>
        <position position="189"/>
    </location>
    <ligand>
        <name>Mg(2+)</name>
        <dbReference type="ChEBI" id="CHEBI:18420"/>
        <label>2</label>
    </ligand>
</feature>
<feature type="binding site" evidence="1">
    <location>
        <position position="193"/>
    </location>
    <ligand>
        <name>Mg(2+)</name>
        <dbReference type="ChEBI" id="CHEBI:18420"/>
        <label>1</label>
    </ligand>
</feature>
<feature type="binding site" evidence="1">
    <location>
        <position position="225"/>
    </location>
    <ligand>
        <name>Mg(2+)</name>
        <dbReference type="ChEBI" id="CHEBI:18420"/>
        <label>2</label>
    </ligand>
</feature>
<feature type="binding site" evidence="1">
    <location>
        <position position="229"/>
    </location>
    <ligand>
        <name>Mg(2+)</name>
        <dbReference type="ChEBI" id="CHEBI:18420"/>
        <label>2</label>
    </ligand>
</feature>
<feature type="binding site" evidence="1">
    <location>
        <position position="250"/>
    </location>
    <ligand>
        <name>substrate</name>
    </ligand>
</feature>
<proteinExistence type="inferred from homology"/>
<name>ILVC_THEYD</name>
<organism>
    <name type="scientific">Thermodesulfovibrio yellowstonii (strain ATCC 51303 / DSM 11347 / YP87)</name>
    <dbReference type="NCBI Taxonomy" id="289376"/>
    <lineage>
        <taxon>Bacteria</taxon>
        <taxon>Pseudomonadati</taxon>
        <taxon>Nitrospirota</taxon>
        <taxon>Thermodesulfovibrionia</taxon>
        <taxon>Thermodesulfovibrionales</taxon>
        <taxon>Thermodesulfovibrionaceae</taxon>
        <taxon>Thermodesulfovibrio</taxon>
    </lineage>
</organism>